<feature type="chain" id="PRO_1000048849" description="tRNA modification GTPase MnmE">
    <location>
        <begin position="1"/>
        <end position="460"/>
    </location>
</feature>
<feature type="domain" description="TrmE-type G">
    <location>
        <begin position="227"/>
        <end position="383"/>
    </location>
</feature>
<feature type="binding site" evidence="1">
    <location>
        <position position="29"/>
    </location>
    <ligand>
        <name>(6S)-5-formyl-5,6,7,8-tetrahydrofolate</name>
        <dbReference type="ChEBI" id="CHEBI:57457"/>
    </ligand>
</feature>
<feature type="binding site" evidence="1">
    <location>
        <position position="91"/>
    </location>
    <ligand>
        <name>(6S)-5-formyl-5,6,7,8-tetrahydrofolate</name>
        <dbReference type="ChEBI" id="CHEBI:57457"/>
    </ligand>
</feature>
<feature type="binding site" evidence="1">
    <location>
        <position position="132"/>
    </location>
    <ligand>
        <name>(6S)-5-formyl-5,6,7,8-tetrahydrofolate</name>
        <dbReference type="ChEBI" id="CHEBI:57457"/>
    </ligand>
</feature>
<feature type="binding site" evidence="1">
    <location>
        <begin position="237"/>
        <end position="242"/>
    </location>
    <ligand>
        <name>GTP</name>
        <dbReference type="ChEBI" id="CHEBI:37565"/>
    </ligand>
</feature>
<feature type="binding site" evidence="1">
    <location>
        <position position="237"/>
    </location>
    <ligand>
        <name>K(+)</name>
        <dbReference type="ChEBI" id="CHEBI:29103"/>
    </ligand>
</feature>
<feature type="binding site" evidence="1">
    <location>
        <position position="241"/>
    </location>
    <ligand>
        <name>Mg(2+)</name>
        <dbReference type="ChEBI" id="CHEBI:18420"/>
    </ligand>
</feature>
<feature type="binding site" evidence="1">
    <location>
        <begin position="256"/>
        <end position="262"/>
    </location>
    <ligand>
        <name>GTP</name>
        <dbReference type="ChEBI" id="CHEBI:37565"/>
    </ligand>
</feature>
<feature type="binding site" evidence="1">
    <location>
        <position position="256"/>
    </location>
    <ligand>
        <name>K(+)</name>
        <dbReference type="ChEBI" id="CHEBI:29103"/>
    </ligand>
</feature>
<feature type="binding site" evidence="1">
    <location>
        <position position="258"/>
    </location>
    <ligand>
        <name>K(+)</name>
        <dbReference type="ChEBI" id="CHEBI:29103"/>
    </ligand>
</feature>
<feature type="binding site" evidence="1">
    <location>
        <position position="261"/>
    </location>
    <ligand>
        <name>K(+)</name>
        <dbReference type="ChEBI" id="CHEBI:29103"/>
    </ligand>
</feature>
<feature type="binding site" evidence="1">
    <location>
        <position position="262"/>
    </location>
    <ligand>
        <name>Mg(2+)</name>
        <dbReference type="ChEBI" id="CHEBI:18420"/>
    </ligand>
</feature>
<feature type="binding site" evidence="1">
    <location>
        <begin position="281"/>
        <end position="284"/>
    </location>
    <ligand>
        <name>GTP</name>
        <dbReference type="ChEBI" id="CHEBI:37565"/>
    </ligand>
</feature>
<feature type="binding site" evidence="1">
    <location>
        <position position="460"/>
    </location>
    <ligand>
        <name>(6S)-5-formyl-5,6,7,8-tetrahydrofolate</name>
        <dbReference type="ChEBI" id="CHEBI:57457"/>
    </ligand>
</feature>
<gene>
    <name evidence="1" type="primary">mnmE</name>
    <name evidence="1" type="synonym">trmE</name>
    <name type="ordered locus">PMT9312_0191</name>
</gene>
<accession>Q31CZ2</accession>
<organism>
    <name type="scientific">Prochlorococcus marinus (strain MIT 9312)</name>
    <dbReference type="NCBI Taxonomy" id="74546"/>
    <lineage>
        <taxon>Bacteria</taxon>
        <taxon>Bacillati</taxon>
        <taxon>Cyanobacteriota</taxon>
        <taxon>Cyanophyceae</taxon>
        <taxon>Synechococcales</taxon>
        <taxon>Prochlorococcaceae</taxon>
        <taxon>Prochlorococcus</taxon>
    </lineage>
</organism>
<evidence type="ECO:0000255" key="1">
    <source>
        <dbReference type="HAMAP-Rule" id="MF_00379"/>
    </source>
</evidence>
<protein>
    <recommendedName>
        <fullName evidence="1">tRNA modification GTPase MnmE</fullName>
        <ecNumber evidence="1">3.6.-.-</ecNumber>
    </recommendedName>
</protein>
<keyword id="KW-0963">Cytoplasm</keyword>
<keyword id="KW-0342">GTP-binding</keyword>
<keyword id="KW-0378">Hydrolase</keyword>
<keyword id="KW-0460">Magnesium</keyword>
<keyword id="KW-0479">Metal-binding</keyword>
<keyword id="KW-0547">Nucleotide-binding</keyword>
<keyword id="KW-0630">Potassium</keyword>
<keyword id="KW-0819">tRNA processing</keyword>
<name>MNME_PROM9</name>
<dbReference type="EC" id="3.6.-.-" evidence="1"/>
<dbReference type="EMBL" id="CP000111">
    <property type="protein sequence ID" value="ABB49253.1"/>
    <property type="molecule type" value="Genomic_DNA"/>
</dbReference>
<dbReference type="RefSeq" id="WP_011375757.1">
    <property type="nucleotide sequence ID" value="NC_007577.1"/>
</dbReference>
<dbReference type="SMR" id="Q31CZ2"/>
<dbReference type="STRING" id="74546.PMT9312_0191"/>
<dbReference type="KEGG" id="pmi:PMT9312_0191"/>
<dbReference type="eggNOG" id="COG0486">
    <property type="taxonomic scope" value="Bacteria"/>
</dbReference>
<dbReference type="HOGENOM" id="CLU_019624_4_1_3"/>
<dbReference type="OrthoDB" id="9805918at2"/>
<dbReference type="Proteomes" id="UP000002715">
    <property type="component" value="Chromosome"/>
</dbReference>
<dbReference type="GO" id="GO:0005829">
    <property type="term" value="C:cytosol"/>
    <property type="evidence" value="ECO:0007669"/>
    <property type="project" value="TreeGrafter"/>
</dbReference>
<dbReference type="GO" id="GO:0005525">
    <property type="term" value="F:GTP binding"/>
    <property type="evidence" value="ECO:0007669"/>
    <property type="project" value="UniProtKB-UniRule"/>
</dbReference>
<dbReference type="GO" id="GO:0003924">
    <property type="term" value="F:GTPase activity"/>
    <property type="evidence" value="ECO:0007669"/>
    <property type="project" value="UniProtKB-UniRule"/>
</dbReference>
<dbReference type="GO" id="GO:0046872">
    <property type="term" value="F:metal ion binding"/>
    <property type="evidence" value="ECO:0007669"/>
    <property type="project" value="UniProtKB-KW"/>
</dbReference>
<dbReference type="GO" id="GO:0030488">
    <property type="term" value="P:tRNA methylation"/>
    <property type="evidence" value="ECO:0007669"/>
    <property type="project" value="TreeGrafter"/>
</dbReference>
<dbReference type="GO" id="GO:0002098">
    <property type="term" value="P:tRNA wobble uridine modification"/>
    <property type="evidence" value="ECO:0007669"/>
    <property type="project" value="TreeGrafter"/>
</dbReference>
<dbReference type="CDD" id="cd04164">
    <property type="entry name" value="trmE"/>
    <property type="match status" value="1"/>
</dbReference>
<dbReference type="CDD" id="cd14858">
    <property type="entry name" value="TrmE_N"/>
    <property type="match status" value="1"/>
</dbReference>
<dbReference type="FunFam" id="3.30.1360.120:FF:000003">
    <property type="entry name" value="tRNA modification GTPase MnmE"/>
    <property type="match status" value="1"/>
</dbReference>
<dbReference type="Gene3D" id="3.40.50.300">
    <property type="entry name" value="P-loop containing nucleotide triphosphate hydrolases"/>
    <property type="match status" value="1"/>
</dbReference>
<dbReference type="Gene3D" id="3.30.1360.120">
    <property type="entry name" value="Probable tRNA modification gtpase trme, domain 1"/>
    <property type="match status" value="1"/>
</dbReference>
<dbReference type="Gene3D" id="1.20.120.430">
    <property type="entry name" value="tRNA modification GTPase MnmE domain 2"/>
    <property type="match status" value="1"/>
</dbReference>
<dbReference type="HAMAP" id="MF_00379">
    <property type="entry name" value="GTPase_MnmE"/>
    <property type="match status" value="1"/>
</dbReference>
<dbReference type="InterPro" id="IPR031168">
    <property type="entry name" value="G_TrmE"/>
</dbReference>
<dbReference type="InterPro" id="IPR006073">
    <property type="entry name" value="GTP-bd"/>
</dbReference>
<dbReference type="InterPro" id="IPR018948">
    <property type="entry name" value="GTP-bd_TrmE_N"/>
</dbReference>
<dbReference type="InterPro" id="IPR004520">
    <property type="entry name" value="GTPase_MnmE"/>
</dbReference>
<dbReference type="InterPro" id="IPR027368">
    <property type="entry name" value="MnmE_dom2"/>
</dbReference>
<dbReference type="InterPro" id="IPR025867">
    <property type="entry name" value="MnmE_helical"/>
</dbReference>
<dbReference type="InterPro" id="IPR027417">
    <property type="entry name" value="P-loop_NTPase"/>
</dbReference>
<dbReference type="InterPro" id="IPR005225">
    <property type="entry name" value="Small_GTP-bd"/>
</dbReference>
<dbReference type="InterPro" id="IPR027266">
    <property type="entry name" value="TrmE/GcvT_dom1"/>
</dbReference>
<dbReference type="NCBIfam" id="TIGR00450">
    <property type="entry name" value="mnmE_trmE_thdF"/>
    <property type="match status" value="1"/>
</dbReference>
<dbReference type="NCBIfam" id="NF003661">
    <property type="entry name" value="PRK05291.1-3"/>
    <property type="match status" value="1"/>
</dbReference>
<dbReference type="NCBIfam" id="TIGR00231">
    <property type="entry name" value="small_GTP"/>
    <property type="match status" value="1"/>
</dbReference>
<dbReference type="PANTHER" id="PTHR42714">
    <property type="entry name" value="TRNA MODIFICATION GTPASE GTPBP3"/>
    <property type="match status" value="1"/>
</dbReference>
<dbReference type="PANTHER" id="PTHR42714:SF2">
    <property type="entry name" value="TRNA MODIFICATION GTPASE GTPBP3, MITOCHONDRIAL"/>
    <property type="match status" value="1"/>
</dbReference>
<dbReference type="Pfam" id="PF01926">
    <property type="entry name" value="MMR_HSR1"/>
    <property type="match status" value="1"/>
</dbReference>
<dbReference type="Pfam" id="PF12631">
    <property type="entry name" value="MnmE_helical"/>
    <property type="match status" value="1"/>
</dbReference>
<dbReference type="Pfam" id="PF10396">
    <property type="entry name" value="TrmE_N"/>
    <property type="match status" value="1"/>
</dbReference>
<dbReference type="PRINTS" id="PR00449">
    <property type="entry name" value="RASTRNSFRMNG"/>
</dbReference>
<dbReference type="SUPFAM" id="SSF52540">
    <property type="entry name" value="P-loop containing nucleoside triphosphate hydrolases"/>
    <property type="match status" value="1"/>
</dbReference>
<dbReference type="SUPFAM" id="SSF116878">
    <property type="entry name" value="TrmE connector domain"/>
    <property type="match status" value="1"/>
</dbReference>
<dbReference type="PROSITE" id="PS51709">
    <property type="entry name" value="G_TRME"/>
    <property type="match status" value="1"/>
</dbReference>
<comment type="function">
    <text evidence="1">Exhibits a very high intrinsic GTPase hydrolysis rate. Involved in the addition of a carboxymethylaminomethyl (cmnm) group at the wobble position (U34) of certain tRNAs, forming tRNA-cmnm(5)s(2)U34.</text>
</comment>
<comment type="cofactor">
    <cofactor evidence="1">
        <name>K(+)</name>
        <dbReference type="ChEBI" id="CHEBI:29103"/>
    </cofactor>
    <text evidence="1">Binds 1 potassium ion per subunit.</text>
</comment>
<comment type="subunit">
    <text evidence="1">Homodimer. Heterotetramer of two MnmE and two MnmG subunits.</text>
</comment>
<comment type="subcellular location">
    <subcellularLocation>
        <location evidence="1">Cytoplasm</location>
    </subcellularLocation>
</comment>
<comment type="similarity">
    <text evidence="1">Belongs to the TRAFAC class TrmE-Era-EngA-EngB-Septin-like GTPase superfamily. TrmE GTPase family.</text>
</comment>
<proteinExistence type="inferred from homology"/>
<sequence>MDSIVTTEDTIAAIASAISIGKGGVAIIRVSGKDSINSCKKIVQTKSKYAWESHRVFHGFILENKQNKFIDEVLILVMKSPNSFTGEDVVELHCHGGIILVNKVLQRLLSSNSRVRLANPGEFSQRAFLNGKIDLTQAESINQLINASNTRSAELAFSGVQGKIKKKINDIKNDLINQLCEIEARVDFEEDFTDFDYNKYLKNIKKVKEKIELLIENAKRNSYIHNGISIALIGKTNVGKSSLLNLLAKKEKAIVTNIPGTTRDVIEVNLTINDIPMKIIDTAGIRETHEQIESIGIKKSFRKIKESDFIIYIYSLEEGFNKEDKKIIQEIPKEKLITILGNKKDLIDCKNINSNELKNTILMSIKNNDGERLLIDTIIKKCGLKQVENINIFLNERHLTNLSSCLSNLNDTDVIIKNKLPFDLLSIELRDGIQNLSKITGQELTEELLDNIFSKFCIGK</sequence>
<reference key="1">
    <citation type="journal article" date="2006" name="Science">
        <title>Genomic islands and the ecology and evolution of Prochlorococcus.</title>
        <authorList>
            <person name="Coleman M.L."/>
            <person name="Sullivan M.B."/>
            <person name="Martiny A.C."/>
            <person name="Steglich C."/>
            <person name="Barry K."/>
            <person name="Delong E.F."/>
            <person name="Chisholm S.W."/>
        </authorList>
    </citation>
    <scope>NUCLEOTIDE SEQUENCE [LARGE SCALE GENOMIC DNA]</scope>
    <source>
        <strain>MIT 9312</strain>
    </source>
</reference>